<comment type="catalytic activity">
    <reaction evidence="1">
        <text>tRNA(Lys) + L-lysine + ATP = L-lysyl-tRNA(Lys) + AMP + diphosphate</text>
        <dbReference type="Rhea" id="RHEA:20792"/>
        <dbReference type="Rhea" id="RHEA-COMP:9696"/>
        <dbReference type="Rhea" id="RHEA-COMP:9697"/>
        <dbReference type="ChEBI" id="CHEBI:30616"/>
        <dbReference type="ChEBI" id="CHEBI:32551"/>
        <dbReference type="ChEBI" id="CHEBI:33019"/>
        <dbReference type="ChEBI" id="CHEBI:78442"/>
        <dbReference type="ChEBI" id="CHEBI:78529"/>
        <dbReference type="ChEBI" id="CHEBI:456215"/>
        <dbReference type="EC" id="6.1.1.6"/>
    </reaction>
</comment>
<comment type="cofactor">
    <cofactor evidence="1">
        <name>Mg(2+)</name>
        <dbReference type="ChEBI" id="CHEBI:18420"/>
    </cofactor>
    <text evidence="1">Binds 3 Mg(2+) ions per subunit.</text>
</comment>
<comment type="subunit">
    <text evidence="1">Homodimer.</text>
</comment>
<comment type="subcellular location">
    <subcellularLocation>
        <location evidence="1">Cytoplasm</location>
    </subcellularLocation>
</comment>
<comment type="similarity">
    <text evidence="1">Belongs to the class-II aminoacyl-tRNA synthetase family.</text>
</comment>
<name>SYK_COLP3</name>
<evidence type="ECO:0000255" key="1">
    <source>
        <dbReference type="HAMAP-Rule" id="MF_00252"/>
    </source>
</evidence>
<reference key="1">
    <citation type="journal article" date="2005" name="Proc. Natl. Acad. Sci. U.S.A.">
        <title>The psychrophilic lifestyle as revealed by the genome sequence of Colwellia psychrerythraea 34H through genomic and proteomic analyses.</title>
        <authorList>
            <person name="Methe B.A."/>
            <person name="Nelson K.E."/>
            <person name="Deming J.W."/>
            <person name="Momen B."/>
            <person name="Melamud E."/>
            <person name="Zhang X."/>
            <person name="Moult J."/>
            <person name="Madupu R."/>
            <person name="Nelson W.C."/>
            <person name="Dodson R.J."/>
            <person name="Brinkac L.M."/>
            <person name="Daugherty S.C."/>
            <person name="Durkin A.S."/>
            <person name="DeBoy R.T."/>
            <person name="Kolonay J.F."/>
            <person name="Sullivan S.A."/>
            <person name="Zhou L."/>
            <person name="Davidsen T.M."/>
            <person name="Wu M."/>
            <person name="Huston A.L."/>
            <person name="Lewis M."/>
            <person name="Weaver B."/>
            <person name="Weidman J.F."/>
            <person name="Khouri H."/>
            <person name="Utterback T.R."/>
            <person name="Feldblyum T.V."/>
            <person name="Fraser C.M."/>
        </authorList>
    </citation>
    <scope>NUCLEOTIDE SEQUENCE [LARGE SCALE GENOMIC DNA]</scope>
    <source>
        <strain>34H / ATCC BAA-681</strain>
    </source>
</reference>
<feature type="chain" id="PRO_1000125515" description="Lysine--tRNA ligase">
    <location>
        <begin position="1"/>
        <end position="524"/>
    </location>
</feature>
<feature type="binding site" evidence="1">
    <location>
        <position position="433"/>
    </location>
    <ligand>
        <name>Mg(2+)</name>
        <dbReference type="ChEBI" id="CHEBI:18420"/>
        <label>1</label>
    </ligand>
</feature>
<feature type="binding site" evidence="1">
    <location>
        <position position="440"/>
    </location>
    <ligand>
        <name>Mg(2+)</name>
        <dbReference type="ChEBI" id="CHEBI:18420"/>
        <label>1</label>
    </ligand>
</feature>
<feature type="binding site" evidence="1">
    <location>
        <position position="440"/>
    </location>
    <ligand>
        <name>Mg(2+)</name>
        <dbReference type="ChEBI" id="CHEBI:18420"/>
        <label>2</label>
    </ligand>
</feature>
<keyword id="KW-0030">Aminoacyl-tRNA synthetase</keyword>
<keyword id="KW-0067">ATP-binding</keyword>
<keyword id="KW-0963">Cytoplasm</keyword>
<keyword id="KW-0436">Ligase</keyword>
<keyword id="KW-0460">Magnesium</keyword>
<keyword id="KW-0479">Metal-binding</keyword>
<keyword id="KW-0547">Nucleotide-binding</keyword>
<keyword id="KW-0648">Protein biosynthesis</keyword>
<dbReference type="EC" id="6.1.1.6" evidence="1"/>
<dbReference type="EMBL" id="CP000083">
    <property type="protein sequence ID" value="AAZ26689.1"/>
    <property type="molecule type" value="Genomic_DNA"/>
</dbReference>
<dbReference type="RefSeq" id="WP_011044818.1">
    <property type="nucleotide sequence ID" value="NC_003910.7"/>
</dbReference>
<dbReference type="SMR" id="Q47WT5"/>
<dbReference type="STRING" id="167879.CPS_4082"/>
<dbReference type="KEGG" id="cps:CPS_4082"/>
<dbReference type="eggNOG" id="COG1190">
    <property type="taxonomic scope" value="Bacteria"/>
</dbReference>
<dbReference type="HOGENOM" id="CLU_008255_6_0_6"/>
<dbReference type="Proteomes" id="UP000000547">
    <property type="component" value="Chromosome"/>
</dbReference>
<dbReference type="GO" id="GO:0005829">
    <property type="term" value="C:cytosol"/>
    <property type="evidence" value="ECO:0007669"/>
    <property type="project" value="TreeGrafter"/>
</dbReference>
<dbReference type="GO" id="GO:0005524">
    <property type="term" value="F:ATP binding"/>
    <property type="evidence" value="ECO:0007669"/>
    <property type="project" value="UniProtKB-UniRule"/>
</dbReference>
<dbReference type="GO" id="GO:0004824">
    <property type="term" value="F:lysine-tRNA ligase activity"/>
    <property type="evidence" value="ECO:0007669"/>
    <property type="project" value="UniProtKB-UniRule"/>
</dbReference>
<dbReference type="GO" id="GO:0000287">
    <property type="term" value="F:magnesium ion binding"/>
    <property type="evidence" value="ECO:0007669"/>
    <property type="project" value="UniProtKB-UniRule"/>
</dbReference>
<dbReference type="GO" id="GO:0000049">
    <property type="term" value="F:tRNA binding"/>
    <property type="evidence" value="ECO:0007669"/>
    <property type="project" value="TreeGrafter"/>
</dbReference>
<dbReference type="GO" id="GO:0006430">
    <property type="term" value="P:lysyl-tRNA aminoacylation"/>
    <property type="evidence" value="ECO:0007669"/>
    <property type="project" value="UniProtKB-UniRule"/>
</dbReference>
<dbReference type="CDD" id="cd00775">
    <property type="entry name" value="LysRS_core"/>
    <property type="match status" value="1"/>
</dbReference>
<dbReference type="CDD" id="cd04322">
    <property type="entry name" value="LysRS_N"/>
    <property type="match status" value="1"/>
</dbReference>
<dbReference type="FunFam" id="2.40.50.140:FF:000024">
    <property type="entry name" value="Lysine--tRNA ligase"/>
    <property type="match status" value="1"/>
</dbReference>
<dbReference type="FunFam" id="3.30.930.10:FF:000001">
    <property type="entry name" value="Lysine--tRNA ligase"/>
    <property type="match status" value="1"/>
</dbReference>
<dbReference type="Gene3D" id="3.30.930.10">
    <property type="entry name" value="Bira Bifunctional Protein, Domain 2"/>
    <property type="match status" value="1"/>
</dbReference>
<dbReference type="Gene3D" id="2.40.50.140">
    <property type="entry name" value="Nucleic acid-binding proteins"/>
    <property type="match status" value="1"/>
</dbReference>
<dbReference type="HAMAP" id="MF_00252">
    <property type="entry name" value="Lys_tRNA_synth_class2"/>
    <property type="match status" value="1"/>
</dbReference>
<dbReference type="InterPro" id="IPR004364">
    <property type="entry name" value="Aa-tRNA-synt_II"/>
</dbReference>
<dbReference type="InterPro" id="IPR006195">
    <property type="entry name" value="aa-tRNA-synth_II"/>
</dbReference>
<dbReference type="InterPro" id="IPR045864">
    <property type="entry name" value="aa-tRNA-synth_II/BPL/LPL"/>
</dbReference>
<dbReference type="InterPro" id="IPR002313">
    <property type="entry name" value="Lys-tRNA-ligase_II"/>
</dbReference>
<dbReference type="InterPro" id="IPR044136">
    <property type="entry name" value="Lys-tRNA-ligase_II_N"/>
</dbReference>
<dbReference type="InterPro" id="IPR018149">
    <property type="entry name" value="Lys-tRNA-synth_II_C"/>
</dbReference>
<dbReference type="InterPro" id="IPR012340">
    <property type="entry name" value="NA-bd_OB-fold"/>
</dbReference>
<dbReference type="InterPro" id="IPR004365">
    <property type="entry name" value="NA-bd_OB_tRNA"/>
</dbReference>
<dbReference type="NCBIfam" id="TIGR00499">
    <property type="entry name" value="lysS_bact"/>
    <property type="match status" value="1"/>
</dbReference>
<dbReference type="NCBIfam" id="NF001756">
    <property type="entry name" value="PRK00484.1"/>
    <property type="match status" value="1"/>
</dbReference>
<dbReference type="PANTHER" id="PTHR42918:SF15">
    <property type="entry name" value="LYSINE--TRNA LIGASE, CHLOROPLASTIC_MITOCHONDRIAL"/>
    <property type="match status" value="1"/>
</dbReference>
<dbReference type="PANTHER" id="PTHR42918">
    <property type="entry name" value="LYSYL-TRNA SYNTHETASE"/>
    <property type="match status" value="1"/>
</dbReference>
<dbReference type="Pfam" id="PF00152">
    <property type="entry name" value="tRNA-synt_2"/>
    <property type="match status" value="1"/>
</dbReference>
<dbReference type="Pfam" id="PF01336">
    <property type="entry name" value="tRNA_anti-codon"/>
    <property type="match status" value="1"/>
</dbReference>
<dbReference type="PRINTS" id="PR00982">
    <property type="entry name" value="TRNASYNTHLYS"/>
</dbReference>
<dbReference type="SUPFAM" id="SSF55681">
    <property type="entry name" value="Class II aaRS and biotin synthetases"/>
    <property type="match status" value="1"/>
</dbReference>
<dbReference type="SUPFAM" id="SSF50249">
    <property type="entry name" value="Nucleic acid-binding proteins"/>
    <property type="match status" value="1"/>
</dbReference>
<dbReference type="PROSITE" id="PS50862">
    <property type="entry name" value="AA_TRNA_LIGASE_II"/>
    <property type="match status" value="1"/>
</dbReference>
<accession>Q47WT5</accession>
<protein>
    <recommendedName>
        <fullName evidence="1">Lysine--tRNA ligase</fullName>
        <ecNumber evidence="1">6.1.1.6</ecNumber>
    </recommendedName>
    <alternativeName>
        <fullName evidence="1">Lysyl-tRNA synthetase</fullName>
        <shortName evidence="1">LysRS</shortName>
    </alternativeName>
</protein>
<proteinExistence type="inferred from homology"/>
<gene>
    <name evidence="1" type="primary">lysS</name>
    <name type="ordered locus">CPS_4082</name>
</gene>
<organism>
    <name type="scientific">Colwellia psychrerythraea (strain 34H / ATCC BAA-681)</name>
    <name type="common">Vibrio psychroerythus</name>
    <dbReference type="NCBI Taxonomy" id="167879"/>
    <lineage>
        <taxon>Bacteria</taxon>
        <taxon>Pseudomonadati</taxon>
        <taxon>Pseudomonadota</taxon>
        <taxon>Gammaproteobacteria</taxon>
        <taxon>Alteromonadales</taxon>
        <taxon>Colwelliaceae</taxon>
        <taxon>Colwellia</taxon>
    </lineage>
</organism>
<sequence>MTDKANNTPVAQDENKLIAERRVKLEKIRSNCSANGFPNDFNREHLAADIQAEHGEKTKEELEELQVTYAIAGRVMAKRGPFLVIQDSSGRIQGYAEKTVQKEIRAKWGSLDIGDIVGIKGILHKSGKGDLYVNMDHYSLLTKSLRPLPEKFHGLSDQETKYRQRYIDLIINEDTRNTFKMRSKIVAGIRNFLTQRDFMEVETPMLQIIPGGATAKPFMTHHNTFDLDMYLRIAPELNLKRLVVGGFDRVFEINRSFRNEGISTRHNPEFTMIEFYQAYADYHDLMNTTEEMLRTIAQDVLGTTTIRNTVKNSEGEVVEEKFYDLGKPFVRLSMVDAILQYGKDHRGAEQLDEAALRDPENNFDAIKAMAKAVGVKENSASKVWGPGKYICEIFEEVAEHLLDQPTFITEYPWEVSPLARRNDENSFITDRFEFFVGGRELANGFSELNDAEDQAERFQKQVAEKDAGDDEAMHYDADYINALEYGLPPTAGEGIGIDRLVMLFTDSPTIKDVILFPHMRPEAE</sequence>